<name>YIDC_BURM7</name>
<proteinExistence type="inferred from homology"/>
<reference key="1">
    <citation type="journal article" date="2010" name="Genome Biol. Evol.">
        <title>Continuing evolution of Burkholderia mallei through genome reduction and large-scale rearrangements.</title>
        <authorList>
            <person name="Losada L."/>
            <person name="Ronning C.M."/>
            <person name="DeShazer D."/>
            <person name="Woods D."/>
            <person name="Fedorova N."/>
            <person name="Kim H.S."/>
            <person name="Shabalina S.A."/>
            <person name="Pearson T.R."/>
            <person name="Brinkac L."/>
            <person name="Tan P."/>
            <person name="Nandi T."/>
            <person name="Crabtree J."/>
            <person name="Badger J."/>
            <person name="Beckstrom-Sternberg S."/>
            <person name="Saqib M."/>
            <person name="Schutzer S.E."/>
            <person name="Keim P."/>
            <person name="Nierman W.C."/>
        </authorList>
    </citation>
    <scope>NUCLEOTIDE SEQUENCE [LARGE SCALE GENOMIC DNA]</scope>
    <source>
        <strain>NCTC 10247</strain>
    </source>
</reference>
<organism>
    <name type="scientific">Burkholderia mallei (strain NCTC 10247)</name>
    <dbReference type="NCBI Taxonomy" id="320389"/>
    <lineage>
        <taxon>Bacteria</taxon>
        <taxon>Pseudomonadati</taxon>
        <taxon>Pseudomonadota</taxon>
        <taxon>Betaproteobacteria</taxon>
        <taxon>Burkholderiales</taxon>
        <taxon>Burkholderiaceae</taxon>
        <taxon>Burkholderia</taxon>
        <taxon>pseudomallei group</taxon>
    </lineage>
</organism>
<accession>A3MS20</accession>
<evidence type="ECO:0000255" key="1">
    <source>
        <dbReference type="HAMAP-Rule" id="MF_01810"/>
    </source>
</evidence>
<dbReference type="EMBL" id="CP000548">
    <property type="protein sequence ID" value="ABO07378.1"/>
    <property type="molecule type" value="Genomic_DNA"/>
</dbReference>
<dbReference type="RefSeq" id="WP_004198813.1">
    <property type="nucleotide sequence ID" value="NZ_CP007802.1"/>
</dbReference>
<dbReference type="SMR" id="A3MS20"/>
<dbReference type="GeneID" id="92981062"/>
<dbReference type="KEGG" id="bmaz:BM44_2970"/>
<dbReference type="KEGG" id="bmn:BMA10247_3550"/>
<dbReference type="PATRIC" id="fig|320389.8.peg.3347"/>
<dbReference type="GO" id="GO:0005886">
    <property type="term" value="C:plasma membrane"/>
    <property type="evidence" value="ECO:0007669"/>
    <property type="project" value="UniProtKB-SubCell"/>
</dbReference>
<dbReference type="GO" id="GO:0032977">
    <property type="term" value="F:membrane insertase activity"/>
    <property type="evidence" value="ECO:0007669"/>
    <property type="project" value="InterPro"/>
</dbReference>
<dbReference type="GO" id="GO:0051205">
    <property type="term" value="P:protein insertion into membrane"/>
    <property type="evidence" value="ECO:0007669"/>
    <property type="project" value="TreeGrafter"/>
</dbReference>
<dbReference type="GO" id="GO:0015031">
    <property type="term" value="P:protein transport"/>
    <property type="evidence" value="ECO:0007669"/>
    <property type="project" value="UniProtKB-KW"/>
</dbReference>
<dbReference type="CDD" id="cd20070">
    <property type="entry name" value="5TM_YidC_Alb3"/>
    <property type="match status" value="1"/>
</dbReference>
<dbReference type="CDD" id="cd19961">
    <property type="entry name" value="EcYidC-like_peri"/>
    <property type="match status" value="1"/>
</dbReference>
<dbReference type="Gene3D" id="2.70.98.90">
    <property type="match status" value="1"/>
</dbReference>
<dbReference type="HAMAP" id="MF_01810">
    <property type="entry name" value="YidC_type1"/>
    <property type="match status" value="1"/>
</dbReference>
<dbReference type="InterPro" id="IPR019998">
    <property type="entry name" value="Membr_insert_YidC"/>
</dbReference>
<dbReference type="InterPro" id="IPR028053">
    <property type="entry name" value="Membr_insert_YidC_N"/>
</dbReference>
<dbReference type="InterPro" id="IPR001708">
    <property type="entry name" value="YidC/ALB3/OXA1/COX18"/>
</dbReference>
<dbReference type="InterPro" id="IPR028055">
    <property type="entry name" value="YidC/Oxa/ALB_C"/>
</dbReference>
<dbReference type="InterPro" id="IPR047196">
    <property type="entry name" value="YidC_ALB_C"/>
</dbReference>
<dbReference type="InterPro" id="IPR038221">
    <property type="entry name" value="YidC_periplasmic_sf"/>
</dbReference>
<dbReference type="NCBIfam" id="NF002352">
    <property type="entry name" value="PRK01318.1-3"/>
    <property type="match status" value="1"/>
</dbReference>
<dbReference type="NCBIfam" id="NF002353">
    <property type="entry name" value="PRK01318.1-4"/>
    <property type="match status" value="1"/>
</dbReference>
<dbReference type="NCBIfam" id="TIGR03593">
    <property type="entry name" value="yidC_nterm"/>
    <property type="match status" value="1"/>
</dbReference>
<dbReference type="NCBIfam" id="TIGR03592">
    <property type="entry name" value="yidC_oxa1_cterm"/>
    <property type="match status" value="1"/>
</dbReference>
<dbReference type="PANTHER" id="PTHR12428:SF65">
    <property type="entry name" value="CYTOCHROME C OXIDASE ASSEMBLY PROTEIN COX18, MITOCHONDRIAL"/>
    <property type="match status" value="1"/>
</dbReference>
<dbReference type="PANTHER" id="PTHR12428">
    <property type="entry name" value="OXA1"/>
    <property type="match status" value="1"/>
</dbReference>
<dbReference type="Pfam" id="PF02096">
    <property type="entry name" value="60KD_IMP"/>
    <property type="match status" value="1"/>
</dbReference>
<dbReference type="Pfam" id="PF14849">
    <property type="entry name" value="YidC_periplas"/>
    <property type="match status" value="1"/>
</dbReference>
<dbReference type="PRINTS" id="PR00701">
    <property type="entry name" value="60KDINNERMP"/>
</dbReference>
<dbReference type="PRINTS" id="PR01900">
    <property type="entry name" value="YIDCPROTEIN"/>
</dbReference>
<protein>
    <recommendedName>
        <fullName evidence="1">Membrane protein insertase YidC</fullName>
    </recommendedName>
    <alternativeName>
        <fullName evidence="1">Foldase YidC</fullName>
    </alternativeName>
    <alternativeName>
        <fullName evidence="1">Membrane integrase YidC</fullName>
    </alternativeName>
    <alternativeName>
        <fullName evidence="1">Membrane protein YidC</fullName>
    </alternativeName>
</protein>
<gene>
    <name evidence="1" type="primary">yidC</name>
    <name type="ordered locus">BMA10247_3550</name>
</gene>
<sequence>MDIKRTVLWVIFFMSAVMLFDNWQRSHGRPSMFFPNVTQTNTASNATNGNGASGASAAAAANALPAAATGAAPATTAPAAQAQLVRFSTDVYNGEIDTRGGTLAKLTLTKAGDGKQPDLSVTLFDHTANHTYLARTGLLGGDFPNHNDVYAQVAGPTSLAADQNTLKLSFESPVKGGVKVVKTYTFTRGSYVIGVDTKIENVGAAPVTPSVYMELVRDNSSVETPMFSHTFLGPAVYTDQKHFQKITFGDIDKNKADYVTSADNGWIAMVQHYFASAWIPQSGAKRDIYVEKIDPTLYRVGVKQPVEAIAPGQSADVSARLFAGPEEERMLEGIAPGLELVKDYGWVTIIAKPLFWLLEKIHGFVGNWGWAIVLLTLLIKAVFFPLSAASYKSMARMKEITPRMQALRERFKSDPQKMNAALMELYKTEKVNPFGGCLPVVIQIPVFISLYWVLLASVEMRGAPWVLWIHDLSQRDPYFILPVLMAVSMFVQTKLNPTPPDPVQAKMMMFMPIAFSVMFFFFPAGLVLYYVVNNVLSIAQQYYITRTLGGAAAKKKAS</sequence>
<comment type="function">
    <text evidence="1">Required for the insertion and/or proper folding and/or complex formation of integral membrane proteins into the membrane. Involved in integration of membrane proteins that insert both dependently and independently of the Sec translocase complex, as well as at least some lipoproteins. Aids folding of multispanning membrane proteins.</text>
</comment>
<comment type="subunit">
    <text evidence="1">Interacts with the Sec translocase complex via SecD. Specifically interacts with transmembrane segments of nascent integral membrane proteins during membrane integration.</text>
</comment>
<comment type="subcellular location">
    <subcellularLocation>
        <location evidence="1">Cell inner membrane</location>
        <topology evidence="1">Multi-pass membrane protein</topology>
    </subcellularLocation>
</comment>
<comment type="similarity">
    <text evidence="1">Belongs to the OXA1/ALB3/YidC family. Type 1 subfamily.</text>
</comment>
<feature type="chain" id="PRO_1000070067" description="Membrane protein insertase YidC">
    <location>
        <begin position="1"/>
        <end position="558"/>
    </location>
</feature>
<feature type="transmembrane region" description="Helical" evidence="1">
    <location>
        <begin position="3"/>
        <end position="23"/>
    </location>
</feature>
<feature type="transmembrane region" description="Helical" evidence="1">
    <location>
        <begin position="364"/>
        <end position="384"/>
    </location>
</feature>
<feature type="transmembrane region" description="Helical" evidence="1">
    <location>
        <begin position="438"/>
        <end position="458"/>
    </location>
</feature>
<feature type="transmembrane region" description="Helical" evidence="1">
    <location>
        <begin position="477"/>
        <end position="497"/>
    </location>
</feature>
<feature type="transmembrane region" description="Helical" evidence="1">
    <location>
        <begin position="508"/>
        <end position="528"/>
    </location>
</feature>
<keyword id="KW-0997">Cell inner membrane</keyword>
<keyword id="KW-1003">Cell membrane</keyword>
<keyword id="KW-0143">Chaperone</keyword>
<keyword id="KW-0472">Membrane</keyword>
<keyword id="KW-0653">Protein transport</keyword>
<keyword id="KW-0812">Transmembrane</keyword>
<keyword id="KW-1133">Transmembrane helix</keyword>
<keyword id="KW-0813">Transport</keyword>